<name>ENGB_PSET1</name>
<accession>Q3IJG3</accession>
<feature type="chain" id="PRO_0000266919" description="Probable GTP-binding protein EngB">
    <location>
        <begin position="1"/>
        <end position="222"/>
    </location>
</feature>
<feature type="domain" description="EngB-type G" evidence="1">
    <location>
        <begin position="27"/>
        <end position="202"/>
    </location>
</feature>
<feature type="binding site" evidence="1">
    <location>
        <begin position="35"/>
        <end position="42"/>
    </location>
    <ligand>
        <name>GTP</name>
        <dbReference type="ChEBI" id="CHEBI:37565"/>
    </ligand>
</feature>
<feature type="binding site" evidence="1">
    <location>
        <position position="42"/>
    </location>
    <ligand>
        <name>Mg(2+)</name>
        <dbReference type="ChEBI" id="CHEBI:18420"/>
    </ligand>
</feature>
<feature type="binding site" evidence="1">
    <location>
        <begin position="61"/>
        <end position="65"/>
    </location>
    <ligand>
        <name>GTP</name>
        <dbReference type="ChEBI" id="CHEBI:37565"/>
    </ligand>
</feature>
<feature type="binding site" evidence="1">
    <location>
        <position position="63"/>
    </location>
    <ligand>
        <name>Mg(2+)</name>
        <dbReference type="ChEBI" id="CHEBI:18420"/>
    </ligand>
</feature>
<feature type="binding site" evidence="1">
    <location>
        <begin position="81"/>
        <end position="84"/>
    </location>
    <ligand>
        <name>GTP</name>
        <dbReference type="ChEBI" id="CHEBI:37565"/>
    </ligand>
</feature>
<feature type="binding site" evidence="1">
    <location>
        <begin position="148"/>
        <end position="151"/>
    </location>
    <ligand>
        <name>GTP</name>
        <dbReference type="ChEBI" id="CHEBI:37565"/>
    </ligand>
</feature>
<feature type="binding site" evidence="1">
    <location>
        <begin position="181"/>
        <end position="183"/>
    </location>
    <ligand>
        <name>GTP</name>
        <dbReference type="ChEBI" id="CHEBI:37565"/>
    </ligand>
</feature>
<protein>
    <recommendedName>
        <fullName evidence="1">Probable GTP-binding protein EngB</fullName>
    </recommendedName>
</protein>
<organism>
    <name type="scientific">Pseudoalteromonas translucida (strain TAC 125)</name>
    <dbReference type="NCBI Taxonomy" id="326442"/>
    <lineage>
        <taxon>Bacteria</taxon>
        <taxon>Pseudomonadati</taxon>
        <taxon>Pseudomonadota</taxon>
        <taxon>Gammaproteobacteria</taxon>
        <taxon>Alteromonadales</taxon>
        <taxon>Pseudoalteromonadaceae</taxon>
        <taxon>Pseudoalteromonas</taxon>
    </lineage>
</organism>
<keyword id="KW-0131">Cell cycle</keyword>
<keyword id="KW-0132">Cell division</keyword>
<keyword id="KW-0342">GTP-binding</keyword>
<keyword id="KW-0460">Magnesium</keyword>
<keyword id="KW-0479">Metal-binding</keyword>
<keyword id="KW-0547">Nucleotide-binding</keyword>
<keyword id="KW-1185">Reference proteome</keyword>
<keyword id="KW-0717">Septation</keyword>
<comment type="function">
    <text evidence="1">Necessary for normal cell division and for the maintenance of normal septation.</text>
</comment>
<comment type="cofactor">
    <cofactor evidence="1">
        <name>Mg(2+)</name>
        <dbReference type="ChEBI" id="CHEBI:18420"/>
    </cofactor>
</comment>
<comment type="similarity">
    <text evidence="1">Belongs to the TRAFAC class TrmE-Era-EngA-EngB-Septin-like GTPase superfamily. EngB GTPase family.</text>
</comment>
<sequence>MLKSRIKYNTASFVTSAPDITKLPADTGIEVAFAGRSNAGKSSALNALTDQKLARTSKTPGRTQLINTFELADVDDMRLIDLPGYGFAKVPIEMKKKWQKSLGEYLQKRQSLKGIVILMDIRHPLKDLDRDLINWAISSEIPVLALLTKADKFKQGPRQSQVLKVRRELSALDGDITVHAFSSLKGTGLPDVAKKLDEWFLGPVVAVPPAEKILNDDTNPTS</sequence>
<evidence type="ECO:0000255" key="1">
    <source>
        <dbReference type="HAMAP-Rule" id="MF_00321"/>
    </source>
</evidence>
<reference key="1">
    <citation type="journal article" date="2005" name="Genome Res.">
        <title>Coping with cold: the genome of the versatile marine Antarctica bacterium Pseudoalteromonas haloplanktis TAC125.</title>
        <authorList>
            <person name="Medigue C."/>
            <person name="Krin E."/>
            <person name="Pascal G."/>
            <person name="Barbe V."/>
            <person name="Bernsel A."/>
            <person name="Bertin P.N."/>
            <person name="Cheung F."/>
            <person name="Cruveiller S."/>
            <person name="D'Amico S."/>
            <person name="Duilio A."/>
            <person name="Fang G."/>
            <person name="Feller G."/>
            <person name="Ho C."/>
            <person name="Mangenot S."/>
            <person name="Marino G."/>
            <person name="Nilsson J."/>
            <person name="Parrilli E."/>
            <person name="Rocha E.P.C."/>
            <person name="Rouy Z."/>
            <person name="Sekowska A."/>
            <person name="Tutino M.L."/>
            <person name="Vallenet D."/>
            <person name="von Heijne G."/>
            <person name="Danchin A."/>
        </authorList>
    </citation>
    <scope>NUCLEOTIDE SEQUENCE [LARGE SCALE GENOMIC DNA]</scope>
    <source>
        <strain>TAC 125</strain>
    </source>
</reference>
<dbReference type="EMBL" id="CR954246">
    <property type="protein sequence ID" value="CAI87801.1"/>
    <property type="molecule type" value="Genomic_DNA"/>
</dbReference>
<dbReference type="SMR" id="Q3IJG3"/>
<dbReference type="STRING" id="326442.PSHAa2753"/>
<dbReference type="KEGG" id="pha:PSHAa2753"/>
<dbReference type="PATRIC" id="fig|326442.8.peg.2663"/>
<dbReference type="eggNOG" id="COG0218">
    <property type="taxonomic scope" value="Bacteria"/>
</dbReference>
<dbReference type="HOGENOM" id="CLU_033732_1_2_6"/>
<dbReference type="BioCyc" id="PHAL326442:PSHA_RS13540-MONOMER"/>
<dbReference type="Proteomes" id="UP000006843">
    <property type="component" value="Chromosome I"/>
</dbReference>
<dbReference type="GO" id="GO:0005829">
    <property type="term" value="C:cytosol"/>
    <property type="evidence" value="ECO:0007669"/>
    <property type="project" value="TreeGrafter"/>
</dbReference>
<dbReference type="GO" id="GO:0005525">
    <property type="term" value="F:GTP binding"/>
    <property type="evidence" value="ECO:0007669"/>
    <property type="project" value="UniProtKB-UniRule"/>
</dbReference>
<dbReference type="GO" id="GO:0046872">
    <property type="term" value="F:metal ion binding"/>
    <property type="evidence" value="ECO:0007669"/>
    <property type="project" value="UniProtKB-KW"/>
</dbReference>
<dbReference type="GO" id="GO:0000917">
    <property type="term" value="P:division septum assembly"/>
    <property type="evidence" value="ECO:0007669"/>
    <property type="project" value="UniProtKB-KW"/>
</dbReference>
<dbReference type="CDD" id="cd01876">
    <property type="entry name" value="YihA_EngB"/>
    <property type="match status" value="1"/>
</dbReference>
<dbReference type="FunFam" id="3.40.50.300:FF:000098">
    <property type="entry name" value="Probable GTP-binding protein EngB"/>
    <property type="match status" value="1"/>
</dbReference>
<dbReference type="Gene3D" id="3.40.50.300">
    <property type="entry name" value="P-loop containing nucleotide triphosphate hydrolases"/>
    <property type="match status" value="1"/>
</dbReference>
<dbReference type="HAMAP" id="MF_00321">
    <property type="entry name" value="GTPase_EngB"/>
    <property type="match status" value="1"/>
</dbReference>
<dbReference type="InterPro" id="IPR030393">
    <property type="entry name" value="G_ENGB_dom"/>
</dbReference>
<dbReference type="InterPro" id="IPR006073">
    <property type="entry name" value="GTP-bd"/>
</dbReference>
<dbReference type="InterPro" id="IPR019987">
    <property type="entry name" value="GTP-bd_ribosome_bio_YsxC"/>
</dbReference>
<dbReference type="InterPro" id="IPR027417">
    <property type="entry name" value="P-loop_NTPase"/>
</dbReference>
<dbReference type="NCBIfam" id="TIGR03598">
    <property type="entry name" value="GTPase_YsxC"/>
    <property type="match status" value="1"/>
</dbReference>
<dbReference type="PANTHER" id="PTHR11649:SF13">
    <property type="entry name" value="ENGB-TYPE G DOMAIN-CONTAINING PROTEIN"/>
    <property type="match status" value="1"/>
</dbReference>
<dbReference type="PANTHER" id="PTHR11649">
    <property type="entry name" value="MSS1/TRME-RELATED GTP-BINDING PROTEIN"/>
    <property type="match status" value="1"/>
</dbReference>
<dbReference type="Pfam" id="PF01926">
    <property type="entry name" value="MMR_HSR1"/>
    <property type="match status" value="1"/>
</dbReference>
<dbReference type="SUPFAM" id="SSF52540">
    <property type="entry name" value="P-loop containing nucleoside triphosphate hydrolases"/>
    <property type="match status" value="1"/>
</dbReference>
<dbReference type="PROSITE" id="PS51706">
    <property type="entry name" value="G_ENGB"/>
    <property type="match status" value="1"/>
</dbReference>
<gene>
    <name evidence="1" type="primary">engB</name>
    <name type="ordered locus">PSHAa2753</name>
</gene>
<proteinExistence type="inferred from homology"/>